<proteinExistence type="inferred from homology"/>
<evidence type="ECO:0000250" key="1"/>
<evidence type="ECO:0000305" key="2"/>
<keyword id="KW-0174">Coenzyme M biosynthesis</keyword>
<keyword id="KW-0378">Hydrolase</keyword>
<keyword id="KW-0460">Magnesium</keyword>
<keyword id="KW-1185">Reference proteome</keyword>
<name>COMB_METTH</name>
<dbReference type="EC" id="3.1.3.71"/>
<dbReference type="EMBL" id="AE000666">
    <property type="protein sequence ID" value="AAB85671.1"/>
    <property type="molecule type" value="Genomic_DNA"/>
</dbReference>
<dbReference type="PIR" id="F69024">
    <property type="entry name" value="F69024"/>
</dbReference>
<dbReference type="SMR" id="O27250"/>
<dbReference type="FunCoup" id="O27250">
    <property type="interactions" value="90"/>
</dbReference>
<dbReference type="STRING" id="187420.MTH_1182"/>
<dbReference type="PaxDb" id="187420-MTH_1182"/>
<dbReference type="EnsemblBacteria" id="AAB85671">
    <property type="protein sequence ID" value="AAB85671"/>
    <property type="gene ID" value="MTH_1182"/>
</dbReference>
<dbReference type="KEGG" id="mth:MTH_1182"/>
<dbReference type="PATRIC" id="fig|187420.15.peg.1160"/>
<dbReference type="HOGENOM" id="CLU_070028_0_0_2"/>
<dbReference type="InParanoid" id="O27250"/>
<dbReference type="UniPathway" id="UPA00355">
    <property type="reaction ID" value="UER00470"/>
</dbReference>
<dbReference type="Proteomes" id="UP000005223">
    <property type="component" value="Chromosome"/>
</dbReference>
<dbReference type="GO" id="GO:0050532">
    <property type="term" value="F:2-phosphosulfolactate phosphatase activity"/>
    <property type="evidence" value="ECO:0007669"/>
    <property type="project" value="UniProtKB-UniRule"/>
</dbReference>
<dbReference type="GO" id="GO:0000287">
    <property type="term" value="F:magnesium ion binding"/>
    <property type="evidence" value="ECO:0007669"/>
    <property type="project" value="UniProtKB-UniRule"/>
</dbReference>
<dbReference type="GO" id="GO:0050545">
    <property type="term" value="F:sulfopyruvate decarboxylase activity"/>
    <property type="evidence" value="ECO:0007669"/>
    <property type="project" value="TreeGrafter"/>
</dbReference>
<dbReference type="GO" id="GO:0019295">
    <property type="term" value="P:coenzyme M biosynthetic process"/>
    <property type="evidence" value="ECO:0007669"/>
    <property type="project" value="UniProtKB-UniRule"/>
</dbReference>
<dbReference type="Gene3D" id="3.90.1560.10">
    <property type="entry name" value="ComB-like"/>
    <property type="match status" value="1"/>
</dbReference>
<dbReference type="HAMAP" id="MF_00490">
    <property type="entry name" value="ComB"/>
    <property type="match status" value="1"/>
</dbReference>
<dbReference type="InterPro" id="IPR005238">
    <property type="entry name" value="ComB-like"/>
</dbReference>
<dbReference type="InterPro" id="IPR036702">
    <property type="entry name" value="ComB-like_sf"/>
</dbReference>
<dbReference type="InterPro" id="IPR027639">
    <property type="entry name" value="ComB_archaeal"/>
</dbReference>
<dbReference type="NCBIfam" id="TIGR00298">
    <property type="entry name" value="2-phosphosulfolactate phosphatase"/>
    <property type="match status" value="1"/>
</dbReference>
<dbReference type="PANTHER" id="PTHR37311">
    <property type="entry name" value="2-PHOSPHOSULFOLACTATE PHOSPHATASE-RELATED"/>
    <property type="match status" value="1"/>
</dbReference>
<dbReference type="PANTHER" id="PTHR37311:SF1">
    <property type="entry name" value="2-PHOSPHOSULFOLACTATE PHOSPHATASE-RELATED"/>
    <property type="match status" value="1"/>
</dbReference>
<dbReference type="Pfam" id="PF04029">
    <property type="entry name" value="2-ph_phosp"/>
    <property type="match status" value="1"/>
</dbReference>
<dbReference type="SUPFAM" id="SSF142823">
    <property type="entry name" value="ComB-like"/>
    <property type="match status" value="1"/>
</dbReference>
<feature type="chain" id="PRO_0000081460" description="2-phosphosulfolactate phosphatase">
    <location>
        <begin position="1"/>
        <end position="226"/>
    </location>
</feature>
<sequence>MAMRIRLSFERPEGSGLCIMVDLLRASATITAALDRFREVIPVADIEEAMEYSRKGYLVAGERGGETLPGFIANSPLEVKNYRGDVLVLTTSNGTRILESVKSDALVGCLNNLDAVAEAARELSDEVEVVMAGVNGRFAIEDFLCAGEIIAAIDGEMDEYAEASVLAVQDRSLVDDAIRRSRSAERLGGLGFMDDVEYCIKRNITGNVPVYRDGRIELMEEIRRLH</sequence>
<comment type="catalytic activity">
    <reaction>
        <text>(2R)-O-phospho-3-sulfolactate + H2O = (2R)-3-sulfolactate + phosphate</text>
        <dbReference type="Rhea" id="RHEA:23416"/>
        <dbReference type="ChEBI" id="CHEBI:15377"/>
        <dbReference type="ChEBI" id="CHEBI:15597"/>
        <dbReference type="ChEBI" id="CHEBI:43474"/>
        <dbReference type="ChEBI" id="CHEBI:58738"/>
        <dbReference type="EC" id="3.1.3.71"/>
    </reaction>
</comment>
<comment type="cofactor">
    <cofactor evidence="1">
        <name>Mg(2+)</name>
        <dbReference type="ChEBI" id="CHEBI:18420"/>
    </cofactor>
</comment>
<comment type="pathway">
    <text>Cofactor biosynthesis; coenzyme M biosynthesis; sulfoacetaldehyde from phosphoenolpyruvate and sulfite: step 2/4.</text>
</comment>
<comment type="similarity">
    <text evidence="2">Belongs to the ComB family.</text>
</comment>
<reference key="1">
    <citation type="journal article" date="1997" name="J. Bacteriol.">
        <title>Complete genome sequence of Methanobacterium thermoautotrophicum deltaH: functional analysis and comparative genomics.</title>
        <authorList>
            <person name="Smith D.R."/>
            <person name="Doucette-Stamm L.A."/>
            <person name="Deloughery C."/>
            <person name="Lee H.-M."/>
            <person name="Dubois J."/>
            <person name="Aldredge T."/>
            <person name="Bashirzadeh R."/>
            <person name="Blakely D."/>
            <person name="Cook R."/>
            <person name="Gilbert K."/>
            <person name="Harrison D."/>
            <person name="Hoang L."/>
            <person name="Keagle P."/>
            <person name="Lumm W."/>
            <person name="Pothier B."/>
            <person name="Qiu D."/>
            <person name="Spadafora R."/>
            <person name="Vicare R."/>
            <person name="Wang Y."/>
            <person name="Wierzbowski J."/>
            <person name="Gibson R."/>
            <person name="Jiwani N."/>
            <person name="Caruso A."/>
            <person name="Bush D."/>
            <person name="Safer H."/>
            <person name="Patwell D."/>
            <person name="Prabhakar S."/>
            <person name="McDougall S."/>
            <person name="Shimer G."/>
            <person name="Goyal A."/>
            <person name="Pietrovski S."/>
            <person name="Church G.M."/>
            <person name="Daniels C.J."/>
            <person name="Mao J.-I."/>
            <person name="Rice P."/>
            <person name="Noelling J."/>
            <person name="Reeve J.N."/>
        </authorList>
    </citation>
    <scope>NUCLEOTIDE SEQUENCE [LARGE SCALE GENOMIC DNA]</scope>
    <source>
        <strain>ATCC 29096 / DSM 1053 / JCM 10044 / NBRC 100330 / Delta H</strain>
    </source>
</reference>
<accession>O27250</accession>
<organism>
    <name type="scientific">Methanothermobacter thermautotrophicus (strain ATCC 29096 / DSM 1053 / JCM 10044 / NBRC 100330 / Delta H)</name>
    <name type="common">Methanobacterium thermoautotrophicum</name>
    <dbReference type="NCBI Taxonomy" id="187420"/>
    <lineage>
        <taxon>Archaea</taxon>
        <taxon>Methanobacteriati</taxon>
        <taxon>Methanobacteriota</taxon>
        <taxon>Methanomada group</taxon>
        <taxon>Methanobacteria</taxon>
        <taxon>Methanobacteriales</taxon>
        <taxon>Methanobacteriaceae</taxon>
        <taxon>Methanothermobacter</taxon>
    </lineage>
</organism>
<protein>
    <recommendedName>
        <fullName>2-phosphosulfolactate phosphatase</fullName>
        <ecNumber>3.1.3.71</ecNumber>
    </recommendedName>
</protein>
<gene>
    <name type="primary">comB</name>
    <name type="ordered locus">MTH_1182</name>
</gene>